<sequence>MSDLKAYLAAKYMSGPKADAILARSSDPTLKKKRKKQQTNEDYIGGSVKAEASGGLMLRDEDEVWGRSKNEDEEDDAPVIGKDLATFKGSKSSWATVANKSALPLPQAEPTSPQDIKPDIKEEPDIDGPAASAPVQMTKRRGGLRTAAQLKEDTERELAEQRSPSPAEGEERPDPTETVHRDATGKIIDVKKRQEEERIREEEERRKEAERKEWTKGMVQRRDREERRRLEKKMAEADVGRSKDDVRMNKEMKEEERWNDPAAAFLTKKKKKGPRRPKYEGPWAPNRFGIAPGFRWDGVDRSNGFEKKYFQAQNTRARREYEHNQWSVEDM</sequence>
<keyword id="KW-0175">Coiled coil</keyword>
<keyword id="KW-0963">Cytoplasm</keyword>
<keyword id="KW-0507">mRNA processing</keyword>
<keyword id="KW-0508">mRNA splicing</keyword>
<keyword id="KW-0539">Nucleus</keyword>
<keyword id="KW-1185">Reference proteome</keyword>
<keyword id="KW-0747">Spliceosome</keyword>
<evidence type="ECO:0000250" key="1"/>
<evidence type="ECO:0000255" key="2"/>
<evidence type="ECO:0000256" key="3">
    <source>
        <dbReference type="SAM" id="MobiDB-lite"/>
    </source>
</evidence>
<evidence type="ECO:0000305" key="4"/>
<accession>P0CN00</accession>
<accession>Q55XX5</accession>
<accession>Q5KM20</accession>
<organism>
    <name type="scientific">Cryptococcus neoformans var. neoformans serotype D (strain JEC21 / ATCC MYA-565)</name>
    <name type="common">Filobasidiella neoformans</name>
    <dbReference type="NCBI Taxonomy" id="214684"/>
    <lineage>
        <taxon>Eukaryota</taxon>
        <taxon>Fungi</taxon>
        <taxon>Dikarya</taxon>
        <taxon>Basidiomycota</taxon>
        <taxon>Agaricomycotina</taxon>
        <taxon>Tremellomycetes</taxon>
        <taxon>Tremellales</taxon>
        <taxon>Cryptococcaceae</taxon>
        <taxon>Cryptococcus</taxon>
        <taxon>Cryptococcus neoformans species complex</taxon>
    </lineage>
</organism>
<name>CWC26_CRYNJ</name>
<dbReference type="EMBL" id="AE017342">
    <property type="protein sequence ID" value="AAW41599.1"/>
    <property type="molecule type" value="Genomic_DNA"/>
</dbReference>
<dbReference type="RefSeq" id="XP_568906.1">
    <property type="nucleotide sequence ID" value="XM_568906.1"/>
</dbReference>
<dbReference type="SMR" id="P0CN00"/>
<dbReference type="FunCoup" id="P0CN00">
    <property type="interactions" value="80"/>
</dbReference>
<dbReference type="STRING" id="214684.P0CN00"/>
<dbReference type="PaxDb" id="214684-P0CN00"/>
<dbReference type="EnsemblFungi" id="AAW41599">
    <property type="protein sequence ID" value="AAW41599"/>
    <property type="gene ID" value="CNB03290"/>
</dbReference>
<dbReference type="VEuPathDB" id="FungiDB:CNB03290"/>
<dbReference type="eggNOG" id="KOG2654">
    <property type="taxonomic scope" value="Eukaryota"/>
</dbReference>
<dbReference type="HOGENOM" id="CLU_024195_0_1_1"/>
<dbReference type="InParanoid" id="P0CN00"/>
<dbReference type="OMA" id="GDVQRQE"/>
<dbReference type="OrthoDB" id="6022at2759"/>
<dbReference type="Proteomes" id="UP000002149">
    <property type="component" value="Chromosome 2"/>
</dbReference>
<dbReference type="GO" id="GO:0005737">
    <property type="term" value="C:cytoplasm"/>
    <property type="evidence" value="ECO:0007669"/>
    <property type="project" value="UniProtKB-SubCell"/>
</dbReference>
<dbReference type="GO" id="GO:0005684">
    <property type="term" value="C:U2-type spliceosomal complex"/>
    <property type="evidence" value="ECO:0000318"/>
    <property type="project" value="GO_Central"/>
</dbReference>
<dbReference type="GO" id="GO:0000398">
    <property type="term" value="P:mRNA splicing, via spliceosome"/>
    <property type="evidence" value="ECO:0000318"/>
    <property type="project" value="GO_Central"/>
</dbReference>
<dbReference type="InterPro" id="IPR018609">
    <property type="entry name" value="Bud13"/>
</dbReference>
<dbReference type="InterPro" id="IPR051112">
    <property type="entry name" value="CWC26_splicing_factor"/>
</dbReference>
<dbReference type="PANTHER" id="PTHR31809">
    <property type="entry name" value="BUD13 HOMOLOG"/>
    <property type="match status" value="1"/>
</dbReference>
<dbReference type="PANTHER" id="PTHR31809:SF0">
    <property type="entry name" value="BUD13 HOMOLOG"/>
    <property type="match status" value="1"/>
</dbReference>
<dbReference type="Pfam" id="PF09736">
    <property type="entry name" value="Bud13"/>
    <property type="match status" value="1"/>
</dbReference>
<gene>
    <name type="primary">CWC26</name>
    <name type="ordered locus">CNB03290</name>
</gene>
<proteinExistence type="inferred from homology"/>
<protein>
    <recommendedName>
        <fullName>Pre-mRNA-splicing factor CWC26</fullName>
    </recommendedName>
</protein>
<comment type="function">
    <text evidence="1">Involved in pre-mRNA splicing.</text>
</comment>
<comment type="subunit">
    <text evidence="1">Associated with the spliceosome.</text>
</comment>
<comment type="subcellular location">
    <subcellularLocation>
        <location evidence="1">Cytoplasm</location>
    </subcellularLocation>
    <subcellularLocation>
        <location evidence="1">Nucleus</location>
    </subcellularLocation>
</comment>
<comment type="similarity">
    <text evidence="4">Belongs to the CWC26 family.</text>
</comment>
<feature type="chain" id="PRO_0000079601" description="Pre-mRNA-splicing factor CWC26">
    <location>
        <begin position="1"/>
        <end position="331"/>
    </location>
</feature>
<feature type="region of interest" description="Disordered" evidence="3">
    <location>
        <begin position="23"/>
        <end position="48"/>
    </location>
</feature>
<feature type="region of interest" description="Disordered" evidence="3">
    <location>
        <begin position="98"/>
        <end position="261"/>
    </location>
</feature>
<feature type="coiled-coil region" evidence="2">
    <location>
        <begin position="186"/>
        <end position="216"/>
    </location>
</feature>
<feature type="compositionally biased region" description="Basic and acidic residues" evidence="3">
    <location>
        <begin position="150"/>
        <end position="160"/>
    </location>
</feature>
<feature type="compositionally biased region" description="Basic and acidic residues" evidence="3">
    <location>
        <begin position="169"/>
        <end position="259"/>
    </location>
</feature>
<reference key="1">
    <citation type="journal article" date="2005" name="Science">
        <title>The genome of the basidiomycetous yeast and human pathogen Cryptococcus neoformans.</title>
        <authorList>
            <person name="Loftus B.J."/>
            <person name="Fung E."/>
            <person name="Roncaglia P."/>
            <person name="Rowley D."/>
            <person name="Amedeo P."/>
            <person name="Bruno D."/>
            <person name="Vamathevan J."/>
            <person name="Miranda M."/>
            <person name="Anderson I.J."/>
            <person name="Fraser J.A."/>
            <person name="Allen J.E."/>
            <person name="Bosdet I.E."/>
            <person name="Brent M.R."/>
            <person name="Chiu R."/>
            <person name="Doering T.L."/>
            <person name="Donlin M.J."/>
            <person name="D'Souza C.A."/>
            <person name="Fox D.S."/>
            <person name="Grinberg V."/>
            <person name="Fu J."/>
            <person name="Fukushima M."/>
            <person name="Haas B.J."/>
            <person name="Huang J.C."/>
            <person name="Janbon G."/>
            <person name="Jones S.J.M."/>
            <person name="Koo H.L."/>
            <person name="Krzywinski M.I."/>
            <person name="Kwon-Chung K.J."/>
            <person name="Lengeler K.B."/>
            <person name="Maiti R."/>
            <person name="Marra M.A."/>
            <person name="Marra R.E."/>
            <person name="Mathewson C.A."/>
            <person name="Mitchell T.G."/>
            <person name="Pertea M."/>
            <person name="Riggs F.R."/>
            <person name="Salzberg S.L."/>
            <person name="Schein J.E."/>
            <person name="Shvartsbeyn A."/>
            <person name="Shin H."/>
            <person name="Shumway M."/>
            <person name="Specht C.A."/>
            <person name="Suh B.B."/>
            <person name="Tenney A."/>
            <person name="Utterback T.R."/>
            <person name="Wickes B.L."/>
            <person name="Wortman J.R."/>
            <person name="Wye N.H."/>
            <person name="Kronstad J.W."/>
            <person name="Lodge J.K."/>
            <person name="Heitman J."/>
            <person name="Davis R.W."/>
            <person name="Fraser C.M."/>
            <person name="Hyman R.W."/>
        </authorList>
    </citation>
    <scope>NUCLEOTIDE SEQUENCE [LARGE SCALE GENOMIC DNA]</scope>
    <source>
        <strain>JEC21 / ATCC MYA-565</strain>
    </source>
</reference>